<evidence type="ECO:0000255" key="1">
    <source>
        <dbReference type="HAMAP-Rule" id="MF_00235"/>
    </source>
</evidence>
<proteinExistence type="inferred from homology"/>
<dbReference type="EC" id="2.7.4.3" evidence="1"/>
<dbReference type="EMBL" id="CP000503">
    <property type="protein sequence ID" value="ABM24548.1"/>
    <property type="molecule type" value="Genomic_DNA"/>
</dbReference>
<dbReference type="RefSeq" id="WP_011789045.1">
    <property type="nucleotide sequence ID" value="NC_008750.1"/>
</dbReference>
<dbReference type="SMR" id="A1RIQ3"/>
<dbReference type="GeneID" id="67443883"/>
<dbReference type="KEGG" id="shw:Sputw3181_1711"/>
<dbReference type="HOGENOM" id="CLU_032354_1_2_6"/>
<dbReference type="UniPathway" id="UPA00588">
    <property type="reaction ID" value="UER00649"/>
</dbReference>
<dbReference type="Proteomes" id="UP000002597">
    <property type="component" value="Chromosome"/>
</dbReference>
<dbReference type="GO" id="GO:0005737">
    <property type="term" value="C:cytoplasm"/>
    <property type="evidence" value="ECO:0007669"/>
    <property type="project" value="UniProtKB-SubCell"/>
</dbReference>
<dbReference type="GO" id="GO:0004017">
    <property type="term" value="F:adenylate kinase activity"/>
    <property type="evidence" value="ECO:0007669"/>
    <property type="project" value="UniProtKB-UniRule"/>
</dbReference>
<dbReference type="GO" id="GO:0005524">
    <property type="term" value="F:ATP binding"/>
    <property type="evidence" value="ECO:0007669"/>
    <property type="project" value="UniProtKB-UniRule"/>
</dbReference>
<dbReference type="GO" id="GO:0044209">
    <property type="term" value="P:AMP salvage"/>
    <property type="evidence" value="ECO:0007669"/>
    <property type="project" value="UniProtKB-UniRule"/>
</dbReference>
<dbReference type="CDD" id="cd01428">
    <property type="entry name" value="ADK"/>
    <property type="match status" value="1"/>
</dbReference>
<dbReference type="FunFam" id="3.40.50.300:FF:000106">
    <property type="entry name" value="Adenylate kinase mitochondrial"/>
    <property type="match status" value="1"/>
</dbReference>
<dbReference type="Gene3D" id="3.40.50.300">
    <property type="entry name" value="P-loop containing nucleotide triphosphate hydrolases"/>
    <property type="match status" value="1"/>
</dbReference>
<dbReference type="HAMAP" id="MF_00235">
    <property type="entry name" value="Adenylate_kinase_Adk"/>
    <property type="match status" value="1"/>
</dbReference>
<dbReference type="InterPro" id="IPR006259">
    <property type="entry name" value="Adenyl_kin_sub"/>
</dbReference>
<dbReference type="InterPro" id="IPR000850">
    <property type="entry name" value="Adenylat/UMP-CMP_kin"/>
</dbReference>
<dbReference type="InterPro" id="IPR033690">
    <property type="entry name" value="Adenylat_kinase_CS"/>
</dbReference>
<dbReference type="InterPro" id="IPR007862">
    <property type="entry name" value="Adenylate_kinase_lid-dom"/>
</dbReference>
<dbReference type="InterPro" id="IPR027417">
    <property type="entry name" value="P-loop_NTPase"/>
</dbReference>
<dbReference type="NCBIfam" id="TIGR01351">
    <property type="entry name" value="adk"/>
    <property type="match status" value="1"/>
</dbReference>
<dbReference type="NCBIfam" id="NF001379">
    <property type="entry name" value="PRK00279.1-1"/>
    <property type="match status" value="1"/>
</dbReference>
<dbReference type="NCBIfam" id="NF001380">
    <property type="entry name" value="PRK00279.1-2"/>
    <property type="match status" value="1"/>
</dbReference>
<dbReference type="NCBIfam" id="NF001381">
    <property type="entry name" value="PRK00279.1-3"/>
    <property type="match status" value="1"/>
</dbReference>
<dbReference type="NCBIfam" id="NF011100">
    <property type="entry name" value="PRK14527.1"/>
    <property type="match status" value="1"/>
</dbReference>
<dbReference type="PANTHER" id="PTHR23359">
    <property type="entry name" value="NUCLEOTIDE KINASE"/>
    <property type="match status" value="1"/>
</dbReference>
<dbReference type="Pfam" id="PF00406">
    <property type="entry name" value="ADK"/>
    <property type="match status" value="1"/>
</dbReference>
<dbReference type="Pfam" id="PF05191">
    <property type="entry name" value="ADK_lid"/>
    <property type="match status" value="1"/>
</dbReference>
<dbReference type="PRINTS" id="PR00094">
    <property type="entry name" value="ADENYLTKNASE"/>
</dbReference>
<dbReference type="SUPFAM" id="SSF52540">
    <property type="entry name" value="P-loop containing nucleoside triphosphate hydrolases"/>
    <property type="match status" value="1"/>
</dbReference>
<dbReference type="PROSITE" id="PS00113">
    <property type="entry name" value="ADENYLATE_KINASE"/>
    <property type="match status" value="1"/>
</dbReference>
<feature type="chain" id="PRO_1000058903" description="Adenylate kinase">
    <location>
        <begin position="1"/>
        <end position="214"/>
    </location>
</feature>
<feature type="region of interest" description="NMP" evidence="1">
    <location>
        <begin position="30"/>
        <end position="59"/>
    </location>
</feature>
<feature type="region of interest" description="LID" evidence="1">
    <location>
        <begin position="122"/>
        <end position="159"/>
    </location>
</feature>
<feature type="binding site" evidence="1">
    <location>
        <begin position="10"/>
        <end position="15"/>
    </location>
    <ligand>
        <name>ATP</name>
        <dbReference type="ChEBI" id="CHEBI:30616"/>
    </ligand>
</feature>
<feature type="binding site" evidence="1">
    <location>
        <position position="31"/>
    </location>
    <ligand>
        <name>AMP</name>
        <dbReference type="ChEBI" id="CHEBI:456215"/>
    </ligand>
</feature>
<feature type="binding site" evidence="1">
    <location>
        <position position="36"/>
    </location>
    <ligand>
        <name>AMP</name>
        <dbReference type="ChEBI" id="CHEBI:456215"/>
    </ligand>
</feature>
<feature type="binding site" evidence="1">
    <location>
        <begin position="57"/>
        <end position="59"/>
    </location>
    <ligand>
        <name>AMP</name>
        <dbReference type="ChEBI" id="CHEBI:456215"/>
    </ligand>
</feature>
<feature type="binding site" evidence="1">
    <location>
        <begin position="85"/>
        <end position="88"/>
    </location>
    <ligand>
        <name>AMP</name>
        <dbReference type="ChEBI" id="CHEBI:456215"/>
    </ligand>
</feature>
<feature type="binding site" evidence="1">
    <location>
        <position position="92"/>
    </location>
    <ligand>
        <name>AMP</name>
        <dbReference type="ChEBI" id="CHEBI:456215"/>
    </ligand>
</feature>
<feature type="binding site" evidence="1">
    <location>
        <position position="123"/>
    </location>
    <ligand>
        <name>ATP</name>
        <dbReference type="ChEBI" id="CHEBI:30616"/>
    </ligand>
</feature>
<feature type="binding site" evidence="1">
    <location>
        <begin position="132"/>
        <end position="133"/>
    </location>
    <ligand>
        <name>ATP</name>
        <dbReference type="ChEBI" id="CHEBI:30616"/>
    </ligand>
</feature>
<feature type="binding site" evidence="1">
    <location>
        <position position="156"/>
    </location>
    <ligand>
        <name>AMP</name>
        <dbReference type="ChEBI" id="CHEBI:456215"/>
    </ligand>
</feature>
<feature type="binding site" evidence="1">
    <location>
        <position position="167"/>
    </location>
    <ligand>
        <name>AMP</name>
        <dbReference type="ChEBI" id="CHEBI:456215"/>
    </ligand>
</feature>
<feature type="binding site" evidence="1">
    <location>
        <position position="200"/>
    </location>
    <ligand>
        <name>ATP</name>
        <dbReference type="ChEBI" id="CHEBI:30616"/>
    </ligand>
</feature>
<name>KAD_SHESW</name>
<protein>
    <recommendedName>
        <fullName evidence="1">Adenylate kinase</fullName>
        <shortName evidence="1">AK</shortName>
        <ecNumber evidence="1">2.7.4.3</ecNumber>
    </recommendedName>
    <alternativeName>
        <fullName evidence="1">ATP-AMP transphosphorylase</fullName>
    </alternativeName>
    <alternativeName>
        <fullName evidence="1">ATP:AMP phosphotransferase</fullName>
    </alternativeName>
    <alternativeName>
        <fullName evidence="1">Adenylate monophosphate kinase</fullName>
    </alternativeName>
</protein>
<gene>
    <name evidence="1" type="primary">adk</name>
    <name type="ordered locus">Sputw3181_1711</name>
</gene>
<organism>
    <name type="scientific">Shewanella sp. (strain W3-18-1)</name>
    <dbReference type="NCBI Taxonomy" id="351745"/>
    <lineage>
        <taxon>Bacteria</taxon>
        <taxon>Pseudomonadati</taxon>
        <taxon>Pseudomonadota</taxon>
        <taxon>Gammaproteobacteria</taxon>
        <taxon>Alteromonadales</taxon>
        <taxon>Shewanellaceae</taxon>
        <taxon>Shewanella</taxon>
    </lineage>
</organism>
<sequence>MRIILLGAPGAGKGTQAQFIMEQYGIPQISTGDMLRAAVKAGTPLGLEAKKVMDAGQLVSDDLIIGLVKERIAQDDCAKGFLLDGFPRTIPQADAMAANGISIDHVIEIDVPDEEIVKRMSGRRVHPGSGRVYHVVFNPPKVEGKDDVTGEDLAIRPDDEEATVRKRLAIYHEQTKPLVEYYGKVAAAGQTKYNKFDGTQSVAAVSEQLASVLK</sequence>
<keyword id="KW-0067">ATP-binding</keyword>
<keyword id="KW-0963">Cytoplasm</keyword>
<keyword id="KW-0418">Kinase</keyword>
<keyword id="KW-0545">Nucleotide biosynthesis</keyword>
<keyword id="KW-0547">Nucleotide-binding</keyword>
<keyword id="KW-0808">Transferase</keyword>
<accession>A1RIQ3</accession>
<comment type="function">
    <text evidence="1">Catalyzes the reversible transfer of the terminal phosphate group between ATP and AMP. Plays an important role in cellular energy homeostasis and in adenine nucleotide metabolism.</text>
</comment>
<comment type="catalytic activity">
    <reaction evidence="1">
        <text>AMP + ATP = 2 ADP</text>
        <dbReference type="Rhea" id="RHEA:12973"/>
        <dbReference type="ChEBI" id="CHEBI:30616"/>
        <dbReference type="ChEBI" id="CHEBI:456215"/>
        <dbReference type="ChEBI" id="CHEBI:456216"/>
        <dbReference type="EC" id="2.7.4.3"/>
    </reaction>
</comment>
<comment type="pathway">
    <text evidence="1">Purine metabolism; AMP biosynthesis via salvage pathway; AMP from ADP: step 1/1.</text>
</comment>
<comment type="subunit">
    <text evidence="1">Monomer.</text>
</comment>
<comment type="subcellular location">
    <subcellularLocation>
        <location evidence="1">Cytoplasm</location>
    </subcellularLocation>
</comment>
<comment type="domain">
    <text evidence="1">Consists of three domains, a large central CORE domain and two small peripheral domains, NMPbind and LID, which undergo movements during catalysis. The LID domain closes over the site of phosphoryl transfer upon ATP binding. Assembling and dissambling the active center during each catalytic cycle provides an effective means to prevent ATP hydrolysis.</text>
</comment>
<comment type="similarity">
    <text evidence="1">Belongs to the adenylate kinase family.</text>
</comment>
<reference key="1">
    <citation type="submission" date="2006-12" db="EMBL/GenBank/DDBJ databases">
        <title>Complete sequence of Shewanella sp. W3-18-1.</title>
        <authorList>
            <consortium name="US DOE Joint Genome Institute"/>
            <person name="Copeland A."/>
            <person name="Lucas S."/>
            <person name="Lapidus A."/>
            <person name="Barry K."/>
            <person name="Detter J.C."/>
            <person name="Glavina del Rio T."/>
            <person name="Hammon N."/>
            <person name="Israni S."/>
            <person name="Dalin E."/>
            <person name="Tice H."/>
            <person name="Pitluck S."/>
            <person name="Chain P."/>
            <person name="Malfatti S."/>
            <person name="Shin M."/>
            <person name="Vergez L."/>
            <person name="Schmutz J."/>
            <person name="Larimer F."/>
            <person name="Land M."/>
            <person name="Hauser L."/>
            <person name="Kyrpides N."/>
            <person name="Lykidis A."/>
            <person name="Tiedje J."/>
            <person name="Richardson P."/>
        </authorList>
    </citation>
    <scope>NUCLEOTIDE SEQUENCE [LARGE SCALE GENOMIC DNA]</scope>
    <source>
        <strain>W3-18-1</strain>
    </source>
</reference>